<protein>
    <recommendedName>
        <fullName evidence="11 12">L-methionine gamma-lyase</fullName>
        <shortName evidence="9">MGL</shortName>
        <ecNumber evidence="2 4">4.4.1.11</ecNumber>
    </recommendedName>
    <alternativeName>
        <fullName evidence="14">Homocysteine desulfhydrase</fullName>
        <ecNumber evidence="2 4">4.4.1.2</ecNumber>
    </alternativeName>
    <alternativeName>
        <fullName>L-methioninase</fullName>
    </alternativeName>
</protein>
<proteinExistence type="evidence at protein level"/>
<organism>
    <name type="scientific">Pseudomonas putida</name>
    <name type="common">Arthrobacter siderocapsulatus</name>
    <dbReference type="NCBI Taxonomy" id="303"/>
    <lineage>
        <taxon>Bacteria</taxon>
        <taxon>Pseudomonadati</taxon>
        <taxon>Pseudomonadota</taxon>
        <taxon>Gammaproteobacteria</taxon>
        <taxon>Pseudomonadales</taxon>
        <taxon>Pseudomonadaceae</taxon>
        <taxon>Pseudomonas</taxon>
    </lineage>
</organism>
<reference key="1">
    <citation type="journal article" date="1995" name="J. Biochem.">
        <title>Structural analysis of the L-methionine gamma-lyase gene from Pseudomonas putida.</title>
        <authorList>
            <person name="Inoue H."/>
            <person name="Sugimoto M."/>
            <person name="Inagaki K."/>
            <person name="Esaki N."/>
            <person name="Soda K."/>
            <person name="Tanaka H."/>
        </authorList>
    </citation>
    <scope>NUCLEOTIDE SEQUENCE [GENOMIC DNA]</scope>
    <scope>FUNCTION</scope>
    <source>
        <strain>ICR 3460</strain>
    </source>
</reference>
<reference key="2">
    <citation type="journal article" date="1997" name="J. Bacteriol.">
        <title>Molecular characterization of the mde operon involved in L-methionine catabolism of Pseudomonas putida.</title>
        <authorList>
            <person name="Inoue H."/>
            <person name="Inagaki K."/>
            <person name="Eriguchi S.I."/>
            <person name="Tamura T."/>
            <person name="Esaki N."/>
            <person name="Soda K."/>
            <person name="Tanaka H."/>
        </authorList>
    </citation>
    <scope>NUCLEOTIDE SEQUENCE [GENOMIC DNA]</scope>
    <scope>FUNCTION</scope>
    <scope>INDUCTION</scope>
    <source>
        <strain>ICR 3460</strain>
    </source>
</reference>
<reference key="3">
    <citation type="journal article" date="1988" name="Biochemistry">
        <title>Specific labeling of the essential cysteine residue of L-methionine gamma-lyase with a cofactor analogue, N-(bromoacetyl)pyridoxamine phosphate.</title>
        <authorList>
            <person name="Nakayama T."/>
            <person name="Esaki N."/>
            <person name="Tanaka H."/>
            <person name="Soda K."/>
        </authorList>
    </citation>
    <scope>PROTEIN SEQUENCE OF 91-137 AND 167-213</scope>
    <scope>PYRIDOXAL PHOSPHATE AT LYS-211</scope>
    <source>
        <strain>ICR 3460</strain>
    </source>
</reference>
<reference key="4">
    <citation type="journal article" date="1984" name="Anal. Biochem.">
        <title>Purification of bacterial L-methionine gamma-lyase.</title>
        <authorList>
            <person name="Nakayama T."/>
            <person name="Esaki N."/>
            <person name="Sugie K."/>
            <person name="Beresov T.T."/>
            <person name="Tanaka H."/>
            <person name="Soda K."/>
        </authorList>
    </citation>
    <scope>FUNCTION</scope>
    <scope>CATALYTIC ACTIVITY</scope>
    <scope>COFACTOR</scope>
    <scope>SUBSTRATE SPECIFICITY</scope>
    <scope>BIOPHYSICOCHEMICAL PROPERTIES</scope>
    <scope>SUBUNIT</scope>
    <source>
        <strain>ICR 3460</strain>
    </source>
</reference>
<reference key="5">
    <citation type="journal article" date="2015" name="Expert Opin. Biol. Ther.">
        <title>Development of recombinant methioninase to target the general cancer-specific metabolic defect of methionine dependence: a 40-year odyssey.</title>
        <authorList>
            <person name="Hoffman R.M."/>
        </authorList>
    </citation>
    <scope>REVIEW</scope>
    <scope>BIOTECHNOLOGY</scope>
</reference>
<reference key="6">
    <citation type="journal article" date="2000" name="J. Biochem.">
        <title>Crystal structure of the pyridoxal 5'-phosphate dependent L-methionine gamma-lyase from Pseudomonas putida.</title>
        <authorList>
            <person name="Motoshima H."/>
            <person name="Inagaki K."/>
            <person name="Kumasaka T."/>
            <person name="Furuichi M."/>
            <person name="Inoue H."/>
            <person name="Tamura T."/>
            <person name="Esaki N."/>
            <person name="Soda K."/>
            <person name="Tanaka N."/>
            <person name="Yamamoto M."/>
            <person name="Tanaka H."/>
        </authorList>
    </citation>
    <scope>X-RAY CRYSTALLOGRAPHY (1.70 ANGSTROMS)</scope>
</reference>
<reference key="7">
    <citation type="submission" date="2003-05" db="PDB data bank">
        <title>Crystal structure of L-methionine alpha-, gamma-lyase.</title>
        <authorList>
            <person name="Allen T.W."/>
            <person name="Sridhar V."/>
            <person name="Prasad G.S."/>
            <person name="Han Q."/>
            <person name="Xu M."/>
            <person name="Tan Y."/>
            <person name="Hoffman R.M."/>
            <person name="Ramaswamy S."/>
        </authorList>
    </citation>
    <scope>X-RAY CRYSTALLOGRAPHY (2.68 ANGSTROMS) IN COVALENT COMPLEX WITH PLP</scope>
</reference>
<reference key="8">
    <citation type="submission" date="2003-08" db="PDB data bank">
        <title>Detailed structure of L-methionine-lyase from Pseudomonas putida.</title>
        <authorList>
            <person name="Misaki S."/>
            <person name="Takimoto A."/>
            <person name="Takakura T."/>
            <person name="Yoshioka T."/>
            <person name="Yamashita M."/>
            <person name="Tamura T."/>
            <person name="Tanaka H."/>
            <person name="Inagaki K."/>
        </authorList>
    </citation>
    <scope>X-RAY CRYSTALLOGRAPHY (1.80 ANGSTROMS) IN COVALENT COMPLEX WITH PLP</scope>
</reference>
<reference key="9">
    <citation type="journal article" date="2007" name="J. Biochem.">
        <title>Structure of the antitumour enzyme L-methionine gamma-lyase from Pseudomonas putida at 1.8 A resolution.</title>
        <authorList>
            <person name="Kudou D."/>
            <person name="Misaki S."/>
            <person name="Yamashita M."/>
            <person name="Tamura T."/>
            <person name="Takakura T."/>
            <person name="Yoshioka T."/>
            <person name="Yagi S."/>
            <person name="Hoffman R.M."/>
            <person name="Takimoto A."/>
            <person name="Esaki N."/>
            <person name="Inagaki K."/>
        </authorList>
    </citation>
    <scope>X-RAY CRYSTALLOGRAPHY (1.70 ANGSTROMS) IN COVALENT COMPLEX WITH PLP</scope>
    <scope>COFACTOR</scope>
    <scope>SUBUNIT</scope>
    <scope>MUTAGENESIS OF ARG-61 AND CYS-116</scope>
    <source>
        <strain>ICR 3460</strain>
    </source>
</reference>
<reference key="10">
    <citation type="journal article" date="2012" name="Biosci. Biotechnol. Biochem.">
        <title>The role of amino acid residues in the active site of L-methionine gamma-lyase from Pseudomonas putida.</title>
        <authorList>
            <person name="Fukumoto M."/>
            <person name="Kudou D."/>
            <person name="Murano S."/>
            <person name="Shiba T."/>
            <person name="Sato D."/>
            <person name="Tamura T."/>
            <person name="Harada S."/>
            <person name="Inagaki K."/>
        </authorList>
    </citation>
    <scope>X-RAY CRYSTALLOGRAPHY (2.10 ANGSTROMS) OF MUTANT HIS-116 IN COMPLEXES WITH L-HOMOCYSTEINE; METHIONINE AND PLP</scope>
    <scope>FUNCTION</scope>
    <scope>CATALYTIC ACTIVITY</scope>
    <scope>BIOPHYSICOCHEMICAL PROPERTIES</scope>
    <scope>COFACTOR</scope>
    <scope>ACTIVITY REGULATION</scope>
    <scope>MUTAGENESIS OF CYS-116; LYS-240 AND ASP-241</scope>
</reference>
<dbReference type="EC" id="4.4.1.11" evidence="2 4"/>
<dbReference type="EC" id="4.4.1.2" evidence="2 4"/>
<dbReference type="EMBL" id="D88554">
    <property type="protein sequence ID" value="BAA13642.1"/>
    <property type="molecule type" value="Genomic_DNA"/>
</dbReference>
<dbReference type="EMBL" id="D89015">
    <property type="protein sequence ID" value="BAA20553.1"/>
    <property type="molecule type" value="Genomic_DNA"/>
</dbReference>
<dbReference type="PIR" id="A27691">
    <property type="entry name" value="A27691"/>
</dbReference>
<dbReference type="PIR" id="JC4174">
    <property type="entry name" value="JC4174"/>
</dbReference>
<dbReference type="PDB" id="1GC0">
    <property type="method" value="X-ray"/>
    <property type="resolution" value="1.70 A"/>
    <property type="chains" value="A/B/C/D=1-398"/>
</dbReference>
<dbReference type="PDB" id="1GC2">
    <property type="method" value="X-ray"/>
    <property type="resolution" value="2.00 A"/>
    <property type="chains" value="A/B/C/D=1-398"/>
</dbReference>
<dbReference type="PDB" id="1PG8">
    <property type="method" value="X-ray"/>
    <property type="resolution" value="2.68 A"/>
    <property type="chains" value="A/B/C/D=1-398"/>
</dbReference>
<dbReference type="PDB" id="1UKJ">
    <property type="method" value="X-ray"/>
    <property type="resolution" value="1.80 A"/>
    <property type="chains" value="A/B/C/D=1-398"/>
</dbReference>
<dbReference type="PDB" id="2O7C">
    <property type="method" value="X-ray"/>
    <property type="resolution" value="1.70 A"/>
    <property type="chains" value="A/B/C/D=1-398"/>
</dbReference>
<dbReference type="PDB" id="3VK2">
    <property type="method" value="X-ray"/>
    <property type="resolution" value="2.30 A"/>
    <property type="chains" value="A/B/C/D=1-398"/>
</dbReference>
<dbReference type="PDB" id="3VK3">
    <property type="method" value="X-ray"/>
    <property type="resolution" value="2.10 A"/>
    <property type="chains" value="A/B/C/D=1-398"/>
</dbReference>
<dbReference type="PDB" id="3VK4">
    <property type="method" value="X-ray"/>
    <property type="resolution" value="2.61 A"/>
    <property type="chains" value="A/B/C/D=1-398"/>
</dbReference>
<dbReference type="PDB" id="5X2V">
    <property type="method" value="X-ray"/>
    <property type="resolution" value="2.40 A"/>
    <property type="chains" value="A/B/C/D=1-398"/>
</dbReference>
<dbReference type="PDB" id="5X2W">
    <property type="method" value="X-ray"/>
    <property type="resolution" value="2.70 A"/>
    <property type="chains" value="A/B/C/D=1-398"/>
</dbReference>
<dbReference type="PDB" id="5X2X">
    <property type="method" value="X-ray"/>
    <property type="resolution" value="2.00 A"/>
    <property type="chains" value="A/B/C/D=1-398"/>
</dbReference>
<dbReference type="PDB" id="5X2Y">
    <property type="method" value="X-ray"/>
    <property type="resolution" value="1.79 A"/>
    <property type="chains" value="A/B/C/D=1-398"/>
</dbReference>
<dbReference type="PDB" id="5X2Z">
    <property type="method" value="X-ray"/>
    <property type="resolution" value="1.80 A"/>
    <property type="chains" value="A/B/C/D=1-398"/>
</dbReference>
<dbReference type="PDB" id="5X30">
    <property type="method" value="X-ray"/>
    <property type="resolution" value="1.70 A"/>
    <property type="chains" value="A/B/C/D=1-398"/>
</dbReference>
<dbReference type="PDB" id="7F1P">
    <property type="method" value="X-ray"/>
    <property type="resolution" value="2.40 A"/>
    <property type="chains" value="A/B/C/D=1-398"/>
</dbReference>
<dbReference type="PDB" id="7F1U">
    <property type="method" value="X-ray"/>
    <property type="resolution" value="2.40 A"/>
    <property type="chains" value="A/B/C/D=1-398"/>
</dbReference>
<dbReference type="PDB" id="7F1V">
    <property type="method" value="X-ray"/>
    <property type="resolution" value="2.25 A"/>
    <property type="chains" value="A/B/C/D=1-398"/>
</dbReference>
<dbReference type="PDBsum" id="1GC0"/>
<dbReference type="PDBsum" id="1GC2"/>
<dbReference type="PDBsum" id="1PG8"/>
<dbReference type="PDBsum" id="1UKJ"/>
<dbReference type="PDBsum" id="2O7C"/>
<dbReference type="PDBsum" id="3VK2"/>
<dbReference type="PDBsum" id="3VK3"/>
<dbReference type="PDBsum" id="3VK4"/>
<dbReference type="PDBsum" id="5X2V"/>
<dbReference type="PDBsum" id="5X2W"/>
<dbReference type="PDBsum" id="5X2X"/>
<dbReference type="PDBsum" id="5X2Y"/>
<dbReference type="PDBsum" id="5X2Z"/>
<dbReference type="PDBsum" id="5X30"/>
<dbReference type="PDBsum" id="7F1P"/>
<dbReference type="PDBsum" id="7F1U"/>
<dbReference type="PDBsum" id="7F1V"/>
<dbReference type="SMR" id="P13254"/>
<dbReference type="DrugBank" id="DB04083">
    <property type="generic name" value="N(6)-(pyridoxal phosphate)-L-lysine"/>
</dbReference>
<dbReference type="BioCyc" id="MetaCyc:MONOMER-284"/>
<dbReference type="BRENDA" id="4.4.1.11">
    <property type="organism ID" value="5092"/>
</dbReference>
<dbReference type="SABIO-RK" id="P13254"/>
<dbReference type="EvolutionaryTrace" id="P13254"/>
<dbReference type="GO" id="GO:0005737">
    <property type="term" value="C:cytoplasm"/>
    <property type="evidence" value="ECO:0007669"/>
    <property type="project" value="TreeGrafter"/>
</dbReference>
<dbReference type="GO" id="GO:0047982">
    <property type="term" value="F:homocysteine desulfhydrase activity"/>
    <property type="evidence" value="ECO:0007669"/>
    <property type="project" value="UniProtKB-EC"/>
</dbReference>
<dbReference type="GO" id="GO:0018826">
    <property type="term" value="F:methionine gamma-lyase activity"/>
    <property type="evidence" value="ECO:0007669"/>
    <property type="project" value="UniProtKB-EC"/>
</dbReference>
<dbReference type="GO" id="GO:0030170">
    <property type="term" value="F:pyridoxal phosphate binding"/>
    <property type="evidence" value="ECO:0007669"/>
    <property type="project" value="InterPro"/>
</dbReference>
<dbReference type="GO" id="GO:0019346">
    <property type="term" value="P:transsulfuration"/>
    <property type="evidence" value="ECO:0007669"/>
    <property type="project" value="InterPro"/>
</dbReference>
<dbReference type="CDD" id="cd00614">
    <property type="entry name" value="CGS_like"/>
    <property type="match status" value="1"/>
</dbReference>
<dbReference type="FunFam" id="3.40.640.10:FF:000046">
    <property type="entry name" value="Cystathionine gamma-lyase"/>
    <property type="match status" value="1"/>
</dbReference>
<dbReference type="FunFam" id="3.90.1150.10:FF:000033">
    <property type="entry name" value="Cystathionine gamma-synthase"/>
    <property type="match status" value="1"/>
</dbReference>
<dbReference type="Gene3D" id="3.90.1150.10">
    <property type="entry name" value="Aspartate Aminotransferase, domain 1"/>
    <property type="match status" value="1"/>
</dbReference>
<dbReference type="Gene3D" id="3.40.640.10">
    <property type="entry name" value="Type I PLP-dependent aspartate aminotransferase-like (Major domain)"/>
    <property type="match status" value="1"/>
</dbReference>
<dbReference type="InterPro" id="IPR000277">
    <property type="entry name" value="Cys/Met-Metab_PyrdxlP-dep_enz"/>
</dbReference>
<dbReference type="InterPro" id="IPR054542">
    <property type="entry name" value="Cys_met_metab_PP"/>
</dbReference>
<dbReference type="InterPro" id="IPR006237">
    <property type="entry name" value="L-Met_gamma_lys"/>
</dbReference>
<dbReference type="InterPro" id="IPR015424">
    <property type="entry name" value="PyrdxlP-dep_Trfase"/>
</dbReference>
<dbReference type="InterPro" id="IPR015421">
    <property type="entry name" value="PyrdxlP-dep_Trfase_major"/>
</dbReference>
<dbReference type="InterPro" id="IPR015422">
    <property type="entry name" value="PyrdxlP-dep_Trfase_small"/>
</dbReference>
<dbReference type="NCBIfam" id="TIGR01328">
    <property type="entry name" value="met_gam_lyase"/>
    <property type="match status" value="1"/>
</dbReference>
<dbReference type="NCBIfam" id="NF005695">
    <property type="entry name" value="PRK07503.1"/>
    <property type="match status" value="1"/>
</dbReference>
<dbReference type="PANTHER" id="PTHR11808:SF80">
    <property type="entry name" value="CYSTATHIONINE GAMMA-LYASE"/>
    <property type="match status" value="1"/>
</dbReference>
<dbReference type="PANTHER" id="PTHR11808">
    <property type="entry name" value="TRANS-SULFURATION ENZYME FAMILY MEMBER"/>
    <property type="match status" value="1"/>
</dbReference>
<dbReference type="Pfam" id="PF01053">
    <property type="entry name" value="Cys_Met_Meta_PP"/>
    <property type="match status" value="1"/>
</dbReference>
<dbReference type="PIRSF" id="PIRSF001434">
    <property type="entry name" value="CGS"/>
    <property type="match status" value="1"/>
</dbReference>
<dbReference type="SUPFAM" id="SSF53383">
    <property type="entry name" value="PLP-dependent transferases"/>
    <property type="match status" value="1"/>
</dbReference>
<dbReference type="PROSITE" id="PS00868">
    <property type="entry name" value="CYS_MET_METAB_PP"/>
    <property type="match status" value="1"/>
</dbReference>
<gene>
    <name evidence="16" type="primary">mdeA</name>
</gene>
<evidence type="ECO:0000269" key="1">
    <source>
    </source>
</evidence>
<evidence type="ECO:0000269" key="2">
    <source>
    </source>
</evidence>
<evidence type="ECO:0000269" key="3">
    <source>
    </source>
</evidence>
<evidence type="ECO:0000269" key="4">
    <source>
    </source>
</evidence>
<evidence type="ECO:0000269" key="5">
    <source>
    </source>
</evidence>
<evidence type="ECO:0000269" key="6">
    <source>
    </source>
</evidence>
<evidence type="ECO:0000269" key="7">
    <source ref="7"/>
</evidence>
<evidence type="ECO:0000269" key="8">
    <source ref="8"/>
</evidence>
<evidence type="ECO:0000303" key="9">
    <source>
    </source>
</evidence>
<evidence type="ECO:0000303" key="10">
    <source>
    </source>
</evidence>
<evidence type="ECO:0000303" key="11">
    <source>
    </source>
</evidence>
<evidence type="ECO:0000303" key="12">
    <source>
    </source>
</evidence>
<evidence type="ECO:0000305" key="13"/>
<evidence type="ECO:0000305" key="14">
    <source>
    </source>
</evidence>
<evidence type="ECO:0000305" key="15">
    <source>
    </source>
</evidence>
<evidence type="ECO:0000312" key="16">
    <source>
        <dbReference type="EMBL" id="BAA20553.1"/>
    </source>
</evidence>
<evidence type="ECO:0007744" key="17">
    <source>
        <dbReference type="PDB" id="1UKJ"/>
    </source>
</evidence>
<evidence type="ECO:0007744" key="18">
    <source>
        <dbReference type="PDB" id="3VK3"/>
    </source>
</evidence>
<evidence type="ECO:0007744" key="19">
    <source>
        <dbReference type="PDB" id="3VK4"/>
    </source>
</evidence>
<evidence type="ECO:0007829" key="20">
    <source>
        <dbReference type="PDB" id="1GC0"/>
    </source>
</evidence>
<evidence type="ECO:0007829" key="21">
    <source>
        <dbReference type="PDB" id="2O7C"/>
    </source>
</evidence>
<evidence type="ECO:0007829" key="22">
    <source>
        <dbReference type="PDB" id="5X2X"/>
    </source>
</evidence>
<evidence type="ECO:0007829" key="23">
    <source>
        <dbReference type="PDB" id="5X30"/>
    </source>
</evidence>
<sequence length="398" mass="42627">MHGSNKLPGFATRAIHHGYDPQDHGGALVPPVYQTATFTFPTVEYGAACFAGEQAGHFYSRISNPTLNLLEARMASLEGGEAGLALASGMGAITSTLWTLLRPGDEVLLGNTLYGCTFAFLHHGIGEFGVKLRHVDMADLQALEAAMTPATRVIYFESPANPNMHMADIAGVAKIARKHGATVVVDNTYCTPYLQRPLELGADLVVHSATKYLSGHGDITAGIVVGSQALVDRIRLQGLKDMTGAVLSPHDAALLMRGIKTLNLRMDRHCANAQVLAEFLARQPQVELIHYPGLASFPQYTLARQQMSQPGGMIAFELKGGIGAGRRFMNALQLFSRAVSLGDAESLAQHPASMTHSSYTPEERAHYGISEGLVRLSVGLEDIDDLLADVQQALKASA</sequence>
<comment type="function">
    <text evidence="2 4 5 15">Catalyzes the alpha,gamma-elimination of L-methionine to produce methanethiol, 2-oxobutanoate and ammonia (PubMed:6742420, PubMed:8586629). Is involved in L-methionine catabolism (PubMed:9190812). In fact, shows a multicatalytic function since it also catalyzes gamma-replacement of L-methionine with thiol compounds, alpha,gamma-elimination and gamma-replacement reactions of L-homocysteine and its S-substituted derivatives, O-substituted-L-homoserines and DL-selenomethionine, and, to a lesser extent, alpha,beta-elimination and beta-replacement reactions of L-cysteine, S-methyl-L-cysteine, and O-acetyl-L-serine (PubMed:22785484, PubMed:6742420). Also catalyzes deamination and gamma-addition reactions of L-vinylglycine (PubMed:6742420). Thus, the enzyme is able to cleave C-S, C-Se, and C-O bonds of sulfur, selenium, and oxygen amino acids, respectively (PubMed:22785484, PubMed:6742420).</text>
</comment>
<comment type="catalytic activity">
    <reaction evidence="2 4">
        <text>L-methionine + H2O = methanethiol + 2-oxobutanoate + NH4(+)</text>
        <dbReference type="Rhea" id="RHEA:23800"/>
        <dbReference type="ChEBI" id="CHEBI:15377"/>
        <dbReference type="ChEBI" id="CHEBI:16007"/>
        <dbReference type="ChEBI" id="CHEBI:16763"/>
        <dbReference type="ChEBI" id="CHEBI:28938"/>
        <dbReference type="ChEBI" id="CHEBI:57844"/>
        <dbReference type="EC" id="4.4.1.11"/>
    </reaction>
</comment>
<comment type="catalytic activity">
    <reaction evidence="2 4">
        <text>L-homocysteine + H2O = 2-oxobutanoate + hydrogen sulfide + NH4(+) + H(+)</text>
        <dbReference type="Rhea" id="RHEA:14501"/>
        <dbReference type="ChEBI" id="CHEBI:15377"/>
        <dbReference type="ChEBI" id="CHEBI:15378"/>
        <dbReference type="ChEBI" id="CHEBI:16763"/>
        <dbReference type="ChEBI" id="CHEBI:28938"/>
        <dbReference type="ChEBI" id="CHEBI:29919"/>
        <dbReference type="ChEBI" id="CHEBI:58199"/>
        <dbReference type="EC" id="4.4.1.2"/>
    </reaction>
</comment>
<comment type="cofactor">
    <cofactor evidence="1 2 4">
        <name>pyridoxal 5'-phosphate</name>
        <dbReference type="ChEBI" id="CHEBI:597326"/>
    </cofactor>
</comment>
<comment type="activity regulation">
    <text evidence="2">Irreversibly inactivated by DL-propargylglycine.</text>
</comment>
<comment type="biophysicochemical properties">
    <kinetics>
        <KM evidence="4">1 mM for L-methionine</KM>
        <KM evidence="2">0.5 mM for L-methionine</KM>
        <KM evidence="2">1.1 mM for DL-homocysteine</KM>
        <KM evidence="2">0.2 mM for L-cysteine</KM>
        <KM evidence="2">0.7 mM for S-methyl-L-cysteine</KM>
        <KM evidence="2">7.2 mM for O-succinyl-L-homoserine</KM>
        <text evidence="2">kcat is 33.4 sec(-1) for the alpha,gamma-elimination of L-methionine. kcat is 71.0 sec(-1) for the alpha,gamma-elimination of DL-homocysteine. kcat is 2.13 sec(-1) for the alpha,beta-elimination of L-cysteine. kcat is 1.58 sec(-1) for the alpha,beta-elimination of S-methyl-L-cysteine. kcat is 2.56 sec(-1) for the alpha,gamma-elimination of O-succinyl-L-homoserine.</text>
    </kinetics>
</comment>
<comment type="subunit">
    <text evidence="1 4">Homotetramer; dimer of active dimers.</text>
</comment>
<comment type="induction">
    <text evidence="6">Is under the control of the positive transcriptional regulator MdeR. Forms part of an operon with mdeB.</text>
</comment>
<comment type="biotechnology">
    <text evidence="10">The recombinant MGL protein cloned form P.putida has been found to have antitumor efficacy in vitro and in vivo. PEGylated MGL is being developed as a cancer drug.</text>
</comment>
<comment type="similarity">
    <text evidence="13">Belongs to the trans-sulfuration enzymes family. L-methionine gamma-lyase subfamily.</text>
</comment>
<name>MEGL_PSEPU</name>
<accession>P13254</accession>
<keyword id="KW-0002">3D-structure</keyword>
<keyword id="KW-0903">Direct protein sequencing</keyword>
<keyword id="KW-0456">Lyase</keyword>
<keyword id="KW-0663">Pyridoxal phosphate</keyword>
<feature type="chain" id="PRO_0000114784" description="L-methionine gamma-lyase">
    <location>
        <begin position="1"/>
        <end position="398"/>
    </location>
</feature>
<feature type="binding site" evidence="7">
    <location>
        <begin position="59"/>
        <end position="61"/>
    </location>
    <ligand>
        <name>pyridoxal 5'-phosphate</name>
        <dbReference type="ChEBI" id="CHEBI:597326"/>
        <note>ligand shared between dimeric partners</note>
    </ligand>
</feature>
<feature type="binding site" description="in other chain" evidence="7">
    <location>
        <begin position="89"/>
        <end position="90"/>
    </location>
    <ligand>
        <name>pyridoxal 5'-phosphate</name>
        <dbReference type="ChEBI" id="CHEBI:597326"/>
        <note>ligand shared between dimeric partners</note>
    </ligand>
</feature>
<feature type="binding site" evidence="2 18 19">
    <location>
        <position position="114"/>
    </location>
    <ligand>
        <name>substrate</name>
    </ligand>
</feature>
<feature type="binding site" description="in other chain" evidence="7">
    <location>
        <begin position="208"/>
        <end position="210"/>
    </location>
    <ligand>
        <name>pyridoxal 5'-phosphate</name>
        <dbReference type="ChEBI" id="CHEBI:597326"/>
        <note>ligand shared between dimeric partners</note>
    </ligand>
</feature>
<feature type="binding site" evidence="2 18 19">
    <location>
        <position position="375"/>
    </location>
    <ligand>
        <name>substrate</name>
    </ligand>
</feature>
<feature type="modified residue" description="N6-(pyridoxal phosphate)lysine" evidence="1 2 3 7 8 17">
    <location>
        <position position="211"/>
    </location>
</feature>
<feature type="mutagenesis site" description="Loss of elimination activity against L-methionine." evidence="1">
    <original>R</original>
    <variation>A</variation>
    <variation>E</variation>
    <variation>F</variation>
    <location>
        <position position="61"/>
    </location>
</feature>
<feature type="mutagenesis site" description="Drastic decrease of the catalytic efficiency of the elimination reaction with L-methionine, by 6700-fold, and increases that with L-cysteine by 7-fold, mainly due to changes in kcat. Loss of ability to catalyze replacement reaction between L-methionine and 2-mercaptoethanol." evidence="2">
    <original>C</original>
    <variation>H</variation>
    <location>
        <position position="116"/>
    </location>
</feature>
<feature type="mutagenesis site" description="9% of wild-type elimination activity against L-methionine." evidence="1">
    <original>C</original>
    <variation>S</variation>
    <location>
        <position position="116"/>
    </location>
</feature>
<feature type="mutagenesis site" description="40% of wild-type elimination activity against L-methionine." evidence="1">
    <original>C</original>
    <variation>T</variation>
    <location>
        <position position="116"/>
    </location>
</feature>
<feature type="mutagenesis site" description="Marked decrease in elimination activity against both L-methionine and DL-homocysteine." evidence="2">
    <original>K</original>
    <variation>D</variation>
    <variation>E</variation>
    <location>
        <position position="240"/>
    </location>
</feature>
<feature type="mutagenesis site" description="50% reduction in alpha,gamma-elimination activity against DL-homocysteine, while retaining elimination activity against L-methionine and L-cysteine." evidence="2">
    <original>K</original>
    <variation>M</variation>
    <location>
        <position position="240"/>
    </location>
</feature>
<feature type="mutagenesis site" description="5 to 14-fold reduction in alpha,gamma-elimination activity against L-methionine, while no change in affinity for L-methionine." evidence="2">
    <original>D</original>
    <variation>H</variation>
    <variation>R</variation>
    <location>
        <position position="241"/>
    </location>
</feature>
<feature type="strand" evidence="21">
    <location>
        <begin position="3"/>
        <end position="7"/>
    </location>
</feature>
<feature type="helix" evidence="20">
    <location>
        <begin position="10"/>
        <end position="16"/>
    </location>
</feature>
<feature type="helix" evidence="20">
    <location>
        <begin position="21"/>
        <end position="24"/>
    </location>
</feature>
<feature type="strand" evidence="20">
    <location>
        <begin position="27"/>
        <end position="29"/>
    </location>
</feature>
<feature type="strand" evidence="21">
    <location>
        <begin position="36"/>
        <end position="38"/>
    </location>
</feature>
<feature type="strand" evidence="23">
    <location>
        <begin position="40"/>
        <end position="42"/>
    </location>
</feature>
<feature type="helix" evidence="21">
    <location>
        <begin position="43"/>
        <end position="50"/>
    </location>
</feature>
<feature type="strand" evidence="22">
    <location>
        <begin position="54"/>
        <end position="56"/>
    </location>
</feature>
<feature type="turn" evidence="21">
    <location>
        <begin position="60"/>
        <end position="62"/>
    </location>
</feature>
<feature type="helix" evidence="20">
    <location>
        <begin position="65"/>
        <end position="78"/>
    </location>
</feature>
<feature type="strand" evidence="20">
    <location>
        <begin position="81"/>
        <end position="88"/>
    </location>
</feature>
<feature type="helix" evidence="20">
    <location>
        <begin position="89"/>
        <end position="100"/>
    </location>
</feature>
<feature type="strand" evidence="20">
    <location>
        <begin position="106"/>
        <end position="112"/>
    </location>
</feature>
<feature type="helix" evidence="20">
    <location>
        <begin position="116"/>
        <end position="123"/>
    </location>
</feature>
<feature type="helix" evidence="20">
    <location>
        <begin position="125"/>
        <end position="128"/>
    </location>
</feature>
<feature type="strand" evidence="20">
    <location>
        <begin position="131"/>
        <end position="135"/>
    </location>
</feature>
<feature type="helix" evidence="20">
    <location>
        <begin position="140"/>
        <end position="146"/>
    </location>
</feature>
<feature type="strand" evidence="20">
    <location>
        <begin position="151"/>
        <end position="159"/>
    </location>
</feature>
<feature type="turn" evidence="20">
    <location>
        <begin position="161"/>
        <end position="163"/>
    </location>
</feature>
<feature type="helix" evidence="20">
    <location>
        <begin position="169"/>
        <end position="176"/>
    </location>
</feature>
<feature type="helix" evidence="20">
    <location>
        <begin position="177"/>
        <end position="179"/>
    </location>
</feature>
<feature type="strand" evidence="20">
    <location>
        <begin position="182"/>
        <end position="186"/>
    </location>
</feature>
<feature type="turn" evidence="20">
    <location>
        <begin position="188"/>
        <end position="190"/>
    </location>
</feature>
<feature type="helix" evidence="20">
    <location>
        <begin position="191"/>
        <end position="194"/>
    </location>
</feature>
<feature type="helix" evidence="20">
    <location>
        <begin position="197"/>
        <end position="200"/>
    </location>
</feature>
<feature type="strand" evidence="20">
    <location>
        <begin position="203"/>
        <end position="208"/>
    </location>
</feature>
<feature type="turn" evidence="23">
    <location>
        <begin position="209"/>
        <end position="214"/>
    </location>
</feature>
<feature type="strand" evidence="20">
    <location>
        <begin position="216"/>
        <end position="218"/>
    </location>
</feature>
<feature type="strand" evidence="20">
    <location>
        <begin position="222"/>
        <end position="226"/>
    </location>
</feature>
<feature type="helix" evidence="20">
    <location>
        <begin position="228"/>
        <end position="236"/>
    </location>
</feature>
<feature type="helix" evidence="20">
    <location>
        <begin position="238"/>
        <end position="242"/>
    </location>
</feature>
<feature type="helix" evidence="20">
    <location>
        <begin position="249"/>
        <end position="259"/>
    </location>
</feature>
<feature type="helix" evidence="20">
    <location>
        <begin position="262"/>
        <end position="281"/>
    </location>
</feature>
<feature type="strand" evidence="20">
    <location>
        <begin position="286"/>
        <end position="291"/>
    </location>
</feature>
<feature type="helix" evidence="21">
    <location>
        <begin position="300"/>
        <end position="306"/>
    </location>
</feature>
<feature type="strand" evidence="20">
    <location>
        <begin position="313"/>
        <end position="318"/>
    </location>
</feature>
<feature type="helix" evidence="20">
    <location>
        <begin position="321"/>
        <end position="331"/>
    </location>
</feature>
<feature type="strand" evidence="20">
    <location>
        <begin position="333"/>
        <end position="337"/>
    </location>
</feature>
<feature type="strand" evidence="21">
    <location>
        <begin position="343"/>
        <end position="345"/>
    </location>
</feature>
<feature type="strand" evidence="20">
    <location>
        <begin position="347"/>
        <end position="349"/>
    </location>
</feature>
<feature type="helix" evidence="20">
    <location>
        <begin position="351"/>
        <end position="353"/>
    </location>
</feature>
<feature type="turn" evidence="20">
    <location>
        <begin position="354"/>
        <end position="356"/>
    </location>
</feature>
<feature type="strand" evidence="20">
    <location>
        <begin position="357"/>
        <end position="359"/>
    </location>
</feature>
<feature type="helix" evidence="20">
    <location>
        <begin position="361"/>
        <end position="366"/>
    </location>
</feature>
<feature type="strand" evidence="20">
    <location>
        <begin position="373"/>
        <end position="377"/>
    </location>
</feature>
<feature type="helix" evidence="20">
    <location>
        <begin position="383"/>
        <end position="397"/>
    </location>
</feature>